<protein>
    <recommendedName>
        <fullName evidence="26">Secreted aspartic protease 2</fullName>
        <shortName evidence="28">ACP 2</shortName>
        <shortName evidence="28">Aspartate protease 2</shortName>
        <ecNumber evidence="15 19 20 21 23 24">3.4.23.24</ecNumber>
    </recommendedName>
    <alternativeName>
        <fullName evidence="28">Candidapepsin-2</fullName>
    </alternativeName>
    <alternativeName>
        <fullName evidence="27">Pepsinogen-11</fullName>
    </alternativeName>
</protein>
<comment type="function">
    <text evidence="6 8 10 11 13 14 16 18">Secreted aspartic peptidases (SAPs) are a group of ten acidic hydrolases considered as key virulence factors (PubMed:11478679, PubMed:12761103, PubMed:15820985, PubMed:15845479, PubMed:19880183, PubMed:20713630, PubMed:22302440, PubMed:23927842). These enzymes supply the fungus with nutrient amino acids as well as are able to degrade the selected host's proteins involved in the immune defense (PubMed:11478679, PubMed:12761103, PubMed:15820985, PubMed:15845479, PubMed:19880183, PubMed:20713630, PubMed:22302440, PubMed:23927842). Induces host inflammatory cytokine production in a proteolytic activity-independent way (PubMed:20713630). Plays a role in tissue damage during superficial infection (PubMed:12761103). Moreover, acts toward human hemoglobin though limited proteolysis to generate a variety of antimicrobial hemocidins, enabling to compete with the other microorganisms of the same physiological niche using the microbicidal peptides generated from the host protein (PubMed:23927842).</text>
</comment>
<comment type="function">
    <text evidence="19 20 21">Plays a key role in defense against host by cleaving histatin-5 (Hst 5), a peptide from human saliva that carries out fungicidal activity (PubMed:27390786, PubMed:29143452, PubMed:31675138). The cleavage rate decreases in an order of SAP2 &gt; SAP9 &gt; SAP3 &gt; SAP7 &gt; SAP4 &gt; SAP1 &gt; SAP8 (PubMed:27390786). The first cleavage occurs between residues 'Lys-17' and 'His-18' of Hst 5, giving DSHAKRHHGYKRKFHEK and HHSHRGY peptides (PubMed:27390786). Simultaneously, the DSHAKRHHGYKRK peptide is also formed (PubMed:27390786). Further fragmentation by SAP2 results in FHEK and DSHAKRHHGY products (PubMed:27390786).</text>
</comment>
<comment type="catalytic activity">
    <reaction evidence="15 19 20 21 23 24">
        <text>Preferential cleavage at the carboxyl of hydrophobic amino acids, but fails to cleave 15-Leu-|-Tyr-16, 16-Tyr-|-Leu-17 and 24-Phe-|-Phe-25 of insulin B chain. Activates trypsinogen, and degrades keratin.</text>
        <dbReference type="EC" id="3.4.23.24"/>
    </reaction>
</comment>
<comment type="biophysicochemical properties">
    <phDependence>
        <text evidence="15 19 23">Optimum pH is 4.0 using BSA or casein-resorufin as substrates, and 6.0-7.0, the pH of the saliva, for cleavage of Hst 5.</text>
    </phDependence>
</comment>
<comment type="subunit">
    <text evidence="1">Monomer.</text>
</comment>
<comment type="subcellular location">
    <subcellularLocation>
        <location evidence="9 22 24">Secreted</location>
    </subcellularLocation>
</comment>
<comment type="induction">
    <text evidence="10 16 17">Expressed during development of germ tubes, pseudohyphae and true hyphae (PubMed:23484407). Expressed in greater amounts in the mature biofilms compared to early biofilms during inflammatory disorder of the palatal mucosa among denture wearers (PubMed:22302440). Induced by fluconazole (PubMed:15820985).</text>
</comment>
<comment type="similarity">
    <text evidence="28">Belongs to the peptidase A1 family.</text>
</comment>
<feature type="signal peptide" evidence="4">
    <location>
        <begin position="1"/>
        <end position="18"/>
    </location>
</feature>
<feature type="propeptide" id="PRO_0000413048" description="Activation peptide" evidence="12">
    <location>
        <begin position="19"/>
        <end position="56"/>
    </location>
</feature>
<feature type="chain" id="PRO_0000413049" description="Secreted aspartic protease 2">
    <location>
        <begin position="57"/>
        <end position="398"/>
    </location>
</feature>
<feature type="domain" description="Peptidase A1" evidence="5">
    <location>
        <begin position="70"/>
        <end position="384"/>
    </location>
</feature>
<feature type="active site" evidence="5">
    <location>
        <position position="88"/>
    </location>
</feature>
<feature type="active site" evidence="5">
    <location>
        <position position="274"/>
    </location>
</feature>
<feature type="binding site" evidence="3">
    <location>
        <begin position="88"/>
        <end position="90"/>
    </location>
    <ligand>
        <name>pepstatin A</name>
        <dbReference type="ChEBI" id="CHEBI:190525"/>
        <note>inhibitor</note>
    </ligand>
</feature>
<feature type="binding site" evidence="3">
    <location>
        <begin position="141"/>
        <end position="142"/>
    </location>
    <ligand>
        <name>pepstatin A</name>
        <dbReference type="ChEBI" id="CHEBI:190525"/>
        <note>inhibitor</note>
    </ligand>
</feature>
<feature type="binding site" evidence="3">
    <location>
        <position position="247"/>
    </location>
    <ligand>
        <name>Zn(2+)</name>
        <dbReference type="ChEBI" id="CHEBI:29105"/>
    </ligand>
</feature>
<feature type="binding site" evidence="3">
    <location>
        <position position="270"/>
    </location>
    <ligand>
        <name>Zn(2+)</name>
        <dbReference type="ChEBI" id="CHEBI:29105"/>
    </ligand>
</feature>
<feature type="binding site" evidence="3">
    <location>
        <begin position="274"/>
        <end position="278"/>
    </location>
    <ligand>
        <name>pepstatin A</name>
        <dbReference type="ChEBI" id="CHEBI:190525"/>
        <note>inhibitor</note>
    </ligand>
</feature>
<feature type="glycosylation site" description="N-linked (GlcNAc...) asparagine" evidence="4">
    <location>
        <position position="313"/>
    </location>
</feature>
<feature type="glycosylation site" description="N-linked (GlcNAc...) asparagine" evidence="4">
    <location>
        <position position="321"/>
    </location>
</feature>
<feature type="disulfide bond" evidence="2">
    <location>
        <begin position="103"/>
        <end position="115"/>
    </location>
</feature>
<feature type="disulfide bond" evidence="2">
    <location>
        <begin position="312"/>
        <end position="350"/>
    </location>
</feature>
<feature type="sequence variant" description="In allele SAP2-1." evidence="7">
    <original>A</original>
    <variation>G</variation>
    <location>
        <position position="9"/>
    </location>
</feature>
<feature type="sequence variant" description="In allele SAP2-1." evidence="7">
    <original>V</original>
    <variation>L</variation>
    <location>
        <position position="273"/>
    </location>
</feature>
<gene>
    <name evidence="26" type="primary">SAP2</name>
    <name evidence="27" type="synonym">PEP11</name>
    <name evidence="25" type="synonym">PRA11</name>
    <name type="ordered locus">CAALFM_CR07800WA</name>
    <name type="ORF">CaO19.11193</name>
    <name type="ORF">CaO19.3708</name>
</gene>
<organism>
    <name type="scientific">Candida albicans (strain SC5314 / ATCC MYA-2876)</name>
    <name type="common">Yeast</name>
    <dbReference type="NCBI Taxonomy" id="237561"/>
    <lineage>
        <taxon>Eukaryota</taxon>
        <taxon>Fungi</taxon>
        <taxon>Dikarya</taxon>
        <taxon>Ascomycota</taxon>
        <taxon>Saccharomycotina</taxon>
        <taxon>Pichiomycetes</taxon>
        <taxon>Debaryomycetaceae</taxon>
        <taxon>Candida/Lodderomyces clade</taxon>
        <taxon>Candida</taxon>
    </lineage>
</organism>
<name>CARP2_CANAL</name>
<accession>P0DJ06</accession>
<accession>A0A1D8PTK5</accession>
<accession>P28871</accession>
<accession>P43097</accession>
<accession>Q59MV8</accession>
<accession>Q8NKF0</accession>
<accession>Q8NKF1</accession>
<proteinExistence type="evidence at protein level"/>
<evidence type="ECO:0000250" key="1">
    <source>
        <dbReference type="UniProtKB" id="P0CS83"/>
    </source>
</evidence>
<evidence type="ECO:0000250" key="2">
    <source>
        <dbReference type="UniProtKB" id="P0CY27"/>
    </source>
</evidence>
<evidence type="ECO:0000250" key="3">
    <source>
        <dbReference type="UniProtKB" id="P0CY29"/>
    </source>
</evidence>
<evidence type="ECO:0000255" key="4"/>
<evidence type="ECO:0000255" key="5">
    <source>
        <dbReference type="PROSITE-ProRule" id="PRU01103"/>
    </source>
</evidence>
<evidence type="ECO:0000269" key="6">
    <source>
    </source>
</evidence>
<evidence type="ECO:0000269" key="7">
    <source>
    </source>
</evidence>
<evidence type="ECO:0000269" key="8">
    <source>
    </source>
</evidence>
<evidence type="ECO:0000269" key="9">
    <source>
    </source>
</evidence>
<evidence type="ECO:0000269" key="10">
    <source>
    </source>
</evidence>
<evidence type="ECO:0000269" key="11">
    <source>
    </source>
</evidence>
<evidence type="ECO:0000269" key="12">
    <source>
    </source>
</evidence>
<evidence type="ECO:0000269" key="13">
    <source>
    </source>
</evidence>
<evidence type="ECO:0000269" key="14">
    <source>
    </source>
</evidence>
<evidence type="ECO:0000269" key="15">
    <source>
    </source>
</evidence>
<evidence type="ECO:0000269" key="16">
    <source>
    </source>
</evidence>
<evidence type="ECO:0000269" key="17">
    <source>
    </source>
</evidence>
<evidence type="ECO:0000269" key="18">
    <source>
    </source>
</evidence>
<evidence type="ECO:0000269" key="19">
    <source>
    </source>
</evidence>
<evidence type="ECO:0000269" key="20">
    <source>
    </source>
</evidence>
<evidence type="ECO:0000269" key="21">
    <source>
    </source>
</evidence>
<evidence type="ECO:0000269" key="22">
    <source>
    </source>
</evidence>
<evidence type="ECO:0000269" key="23">
    <source>
    </source>
</evidence>
<evidence type="ECO:0000269" key="24">
    <source>
    </source>
</evidence>
<evidence type="ECO:0000303" key="25">
    <source>
    </source>
</evidence>
<evidence type="ECO:0000303" key="26">
    <source>
    </source>
</evidence>
<evidence type="ECO:0000303" key="27">
    <source>
    </source>
</evidence>
<evidence type="ECO:0000305" key="28"/>
<keyword id="KW-0064">Aspartyl protease</keyword>
<keyword id="KW-0165">Cleavage on pair of basic residues</keyword>
<keyword id="KW-0903">Direct protein sequencing</keyword>
<keyword id="KW-1015">Disulfide bond</keyword>
<keyword id="KW-0325">Glycoprotein</keyword>
<keyword id="KW-0378">Hydrolase</keyword>
<keyword id="KW-0479">Metal-binding</keyword>
<keyword id="KW-0645">Protease</keyword>
<keyword id="KW-1185">Reference proteome</keyword>
<keyword id="KW-0964">Secreted</keyword>
<keyword id="KW-0732">Signal</keyword>
<keyword id="KW-0843">Virulence</keyword>
<keyword id="KW-0862">Zinc</keyword>
<keyword id="KW-0865">Zymogen</keyword>
<dbReference type="EC" id="3.4.23.24" evidence="15 19 20 21 23 24"/>
<dbReference type="EMBL" id="AF481100">
    <property type="protein sequence ID" value="AAM21050.1"/>
    <property type="molecule type" value="Genomic_DNA"/>
</dbReference>
<dbReference type="EMBL" id="AF481101">
    <property type="protein sequence ID" value="AAM21051.1"/>
    <property type="molecule type" value="Genomic_DNA"/>
</dbReference>
<dbReference type="EMBL" id="CP017630">
    <property type="protein sequence ID" value="AOW31471.1"/>
    <property type="molecule type" value="Genomic_DNA"/>
</dbReference>
<dbReference type="PIR" id="A45280">
    <property type="entry name" value="A45280"/>
</dbReference>
<dbReference type="RefSeq" id="XP_711047.1">
    <property type="nucleotide sequence ID" value="XM_705955.2"/>
</dbReference>
<dbReference type="SMR" id="P0DJ06"/>
<dbReference type="STRING" id="237561.P0DJ06"/>
<dbReference type="DrugBank" id="DB03241">
    <property type="generic name" value="1-Amino-1-Carbonyl Pentane"/>
</dbReference>
<dbReference type="DrugBank" id="DB04387">
    <property type="generic name" value="1-Hydroxy-2-Amino-3-Cyclohexylpropane"/>
</dbReference>
<dbReference type="DrugBank" id="DB04451">
    <property type="generic name" value="4-Methylpiperazin-1-Yl Carbonyl Group"/>
</dbReference>
<dbReference type="DrugBank" id="DB03659">
    <property type="generic name" value="Butylamine"/>
</dbReference>
<dbReference type="DrugBank" id="DB03090">
    <property type="generic name" value="Ethylaminobenzylmethylcarbonyl Group"/>
</dbReference>
<dbReference type="MEROPS" id="A01.060"/>
<dbReference type="GlyCosmos" id="P0DJ06">
    <property type="glycosylation" value="2 sites, No reported glycans"/>
</dbReference>
<dbReference type="EnsemblFungi" id="CR_07800W_A-T">
    <property type="protein sequence ID" value="CR_07800W_A-T-p1"/>
    <property type="gene ID" value="CR_07800W_A"/>
</dbReference>
<dbReference type="GeneID" id="3647354"/>
<dbReference type="KEGG" id="cal:CAALFM_CR07800WA"/>
<dbReference type="CGD" id="CAL0000196689">
    <property type="gene designation" value="SAP2"/>
</dbReference>
<dbReference type="VEuPathDB" id="FungiDB:CR_07800W_A"/>
<dbReference type="eggNOG" id="KOG1339">
    <property type="taxonomic scope" value="Eukaryota"/>
</dbReference>
<dbReference type="HOGENOM" id="CLU_013253_9_1_1"/>
<dbReference type="InParanoid" id="P0DJ06"/>
<dbReference type="OMA" id="TEYGFEG"/>
<dbReference type="OrthoDB" id="771136at2759"/>
<dbReference type="BRENDA" id="3.4.23.24">
    <property type="organism ID" value="1096"/>
</dbReference>
<dbReference type="PHI-base" id="PHI:6784"/>
<dbReference type="PHI-base" id="PHI:6790"/>
<dbReference type="PHI-base" id="PHI:6812"/>
<dbReference type="PHI-base" id="PHI:72"/>
<dbReference type="PRO" id="PR:P0DJ06"/>
<dbReference type="Proteomes" id="UP000000559">
    <property type="component" value="Chromosome R"/>
</dbReference>
<dbReference type="GO" id="GO:0005576">
    <property type="term" value="C:extracellular region"/>
    <property type="evidence" value="ECO:0000314"/>
    <property type="project" value="CGD"/>
</dbReference>
<dbReference type="GO" id="GO:1903561">
    <property type="term" value="C:extracellular vesicle"/>
    <property type="evidence" value="ECO:0000314"/>
    <property type="project" value="CGD"/>
</dbReference>
<dbReference type="GO" id="GO:0009277">
    <property type="term" value="C:fungal-type cell wall"/>
    <property type="evidence" value="ECO:0000318"/>
    <property type="project" value="GO_Central"/>
</dbReference>
<dbReference type="GO" id="GO:0004190">
    <property type="term" value="F:aspartic-type endopeptidase activity"/>
    <property type="evidence" value="ECO:0000314"/>
    <property type="project" value="UniProtKB"/>
</dbReference>
<dbReference type="GO" id="GO:0046872">
    <property type="term" value="F:metal ion binding"/>
    <property type="evidence" value="ECO:0007669"/>
    <property type="project" value="UniProtKB-KW"/>
</dbReference>
<dbReference type="GO" id="GO:0044406">
    <property type="term" value="P:adhesion of symbiont to host"/>
    <property type="evidence" value="ECO:0000315"/>
    <property type="project" value="CGD"/>
</dbReference>
<dbReference type="GO" id="GO:0031505">
    <property type="term" value="P:fungal-type cell wall organization"/>
    <property type="evidence" value="ECO:0000318"/>
    <property type="project" value="GO_Central"/>
</dbReference>
<dbReference type="GO" id="GO:0030163">
    <property type="term" value="P:protein catabolic process"/>
    <property type="evidence" value="ECO:0000314"/>
    <property type="project" value="CGD"/>
</dbReference>
<dbReference type="GO" id="GO:0006508">
    <property type="term" value="P:proteolysis"/>
    <property type="evidence" value="ECO:0000314"/>
    <property type="project" value="UniProtKB"/>
</dbReference>
<dbReference type="GO" id="GO:0006465">
    <property type="term" value="P:signal peptide processing"/>
    <property type="evidence" value="ECO:0000314"/>
    <property type="project" value="CGD"/>
</dbReference>
<dbReference type="GO" id="GO:0035756">
    <property type="term" value="P:symbiont-mediated migration across host transepithelium"/>
    <property type="evidence" value="ECO:0000315"/>
    <property type="project" value="CGD"/>
</dbReference>
<dbReference type="CDD" id="cd05474">
    <property type="entry name" value="SAP_like"/>
    <property type="match status" value="1"/>
</dbReference>
<dbReference type="FunFam" id="2.40.70.10:FF:000011">
    <property type="entry name" value="Aspartic protease"/>
    <property type="match status" value="1"/>
</dbReference>
<dbReference type="FunFam" id="2.40.70.10:FF:000023">
    <property type="entry name" value="Aspartic protease"/>
    <property type="match status" value="1"/>
</dbReference>
<dbReference type="Gene3D" id="2.40.70.10">
    <property type="entry name" value="Acid Proteases"/>
    <property type="match status" value="2"/>
</dbReference>
<dbReference type="InterPro" id="IPR001461">
    <property type="entry name" value="Aspartic_peptidase_A1"/>
</dbReference>
<dbReference type="InterPro" id="IPR001969">
    <property type="entry name" value="Aspartic_peptidase_AS"/>
</dbReference>
<dbReference type="InterPro" id="IPR033121">
    <property type="entry name" value="PEPTIDASE_A1"/>
</dbReference>
<dbReference type="InterPro" id="IPR021109">
    <property type="entry name" value="Peptidase_aspartic_dom_sf"/>
</dbReference>
<dbReference type="InterPro" id="IPR033876">
    <property type="entry name" value="SAP-like"/>
</dbReference>
<dbReference type="PANTHER" id="PTHR47966:SF65">
    <property type="entry name" value="ASPARTIC-TYPE ENDOPEPTIDASE"/>
    <property type="match status" value="1"/>
</dbReference>
<dbReference type="PANTHER" id="PTHR47966">
    <property type="entry name" value="BETA-SITE APP-CLEAVING ENZYME, ISOFORM A-RELATED"/>
    <property type="match status" value="1"/>
</dbReference>
<dbReference type="Pfam" id="PF00026">
    <property type="entry name" value="Asp"/>
    <property type="match status" value="1"/>
</dbReference>
<dbReference type="PRINTS" id="PR00792">
    <property type="entry name" value="PEPSIN"/>
</dbReference>
<dbReference type="SUPFAM" id="SSF50630">
    <property type="entry name" value="Acid proteases"/>
    <property type="match status" value="1"/>
</dbReference>
<dbReference type="PROSITE" id="PS00141">
    <property type="entry name" value="ASP_PROTEASE"/>
    <property type="match status" value="2"/>
</dbReference>
<dbReference type="PROSITE" id="PS51767">
    <property type="entry name" value="PEPTIDASE_A1"/>
    <property type="match status" value="1"/>
</dbReference>
<sequence length="398" mass="42316">MFLKNIFIALAIALLVDATPTTTKRSAGFVALDFSVVKTPKAFPVTNGQEGKTSKRQAVPVTLHNEQVTYAADITVGSNNQKLNVIVDTGSSDLWVPDVNVDCQVTYSDQTADFCKQKGTYDPSGSSASQDLNTPFKIGYGDGSSSQGTLYKDTVGFGGVSIKNQVLADVDSTSIDQGILGVGYKTNEAGGSYDNVPVTLKKQGVIAKNAYSLYLNSPDAATGQIIFGGVDNAKYSGSLIALPVTSDRELRISLGSVEVSGKTINTDNVDVLVDSGTTITYLQQDLADQIIKAFNGKLTQDSNGNSFYEVDCNLSGDVVFNFSKNAKISVPASEFAASLQGDDGQPYDKCQLLFDVNDANILGDNFLRSAYIVYDLDDNEISLAQVKYTSASSISALT</sequence>
<reference key="1">
    <citation type="journal article" date="2002" name="Mol. Microbiol.">
        <title>Host versus in vitro signals and intrastrain allelic differences in the expression of a Candida albicans virulence gene.</title>
        <authorList>
            <person name="Staib P."/>
            <person name="Kretschmar M."/>
            <person name="Nichterlein T."/>
            <person name="Hof H."/>
            <person name="Morschhauser J."/>
        </authorList>
    </citation>
    <scope>NUCLEOTIDE SEQUENCE [GENOMIC DNA]</scope>
    <scope>VARIANTS GLY-9 AND LEU-273</scope>
    <source>
        <strain>SC5314 / CAI4 / ATCC MYA-682</strain>
    </source>
</reference>
<reference key="2">
    <citation type="journal article" date="2004" name="Proc. Natl. Acad. Sci. U.S.A.">
        <title>The diploid genome sequence of Candida albicans.</title>
        <authorList>
            <person name="Jones T."/>
            <person name="Federspiel N.A."/>
            <person name="Chibana H."/>
            <person name="Dungan J."/>
            <person name="Kalman S."/>
            <person name="Magee B.B."/>
            <person name="Newport G."/>
            <person name="Thorstenson Y.R."/>
            <person name="Agabian N."/>
            <person name="Magee P.T."/>
            <person name="Davis R.W."/>
            <person name="Scherer S."/>
        </authorList>
    </citation>
    <scope>NUCLEOTIDE SEQUENCE [LARGE SCALE GENOMIC DNA]</scope>
    <source>
        <strain>SC5314 / ATCC MYA-2876</strain>
    </source>
</reference>
<reference key="3">
    <citation type="journal article" date="2007" name="Genome Biol.">
        <title>Assembly of the Candida albicans genome into sixteen supercontigs aligned on the eight chromosomes.</title>
        <authorList>
            <person name="van het Hoog M."/>
            <person name="Rast T.J."/>
            <person name="Martchenko M."/>
            <person name="Grindle S."/>
            <person name="Dignard D."/>
            <person name="Hogues H."/>
            <person name="Cuomo C."/>
            <person name="Berriman M."/>
            <person name="Scherer S."/>
            <person name="Magee B.B."/>
            <person name="Whiteway M."/>
            <person name="Chibana H."/>
            <person name="Nantel A."/>
            <person name="Magee P.T."/>
        </authorList>
    </citation>
    <scope>GENOME REANNOTATION</scope>
    <source>
        <strain>SC5314 / ATCC MYA-2876</strain>
    </source>
</reference>
<reference key="4">
    <citation type="journal article" date="2013" name="Genome Biol.">
        <title>Assembly of a phased diploid Candida albicans genome facilitates allele-specific measurements and provides a simple model for repeat and indel structure.</title>
        <authorList>
            <person name="Muzzey D."/>
            <person name="Schwartz K."/>
            <person name="Weissman J.S."/>
            <person name="Sherlock G."/>
        </authorList>
    </citation>
    <scope>NUCLEOTIDE SEQUENCE [LARGE SCALE GENOMIC DNA]</scope>
    <scope>GENOME REANNOTATION</scope>
    <source>
        <strain>SC5314 / ATCC MYA-2876</strain>
    </source>
</reference>
<reference key="5">
    <citation type="journal article" date="1991" name="Infect. Immun.">
        <title>Molecular cloning of the secretory acid proteinase gene from Candida albicans and its use as a species-specific probe.</title>
        <authorList>
            <person name="Ganesan K."/>
            <person name="Banerjee A."/>
            <person name="Datta A."/>
        </authorList>
    </citation>
    <scope>PROTEIN SEQUENCE OF 57-71</scope>
    <source>
        <strain>SC5314 / ATCC MYA-2876</strain>
    </source>
</reference>
<reference key="6">
    <citation type="journal article" date="1992" name="J. Bacteriol.">
        <title>A second gene for a secreted aspartate proteinase in Candida albicans.</title>
        <authorList>
            <person name="Wright R.J."/>
            <person name="Carne A."/>
            <person name="Hieber A.D."/>
            <person name="Lamont I.L."/>
            <person name="Emerson G.W."/>
            <person name="Sullivan P.A."/>
        </authorList>
    </citation>
    <scope>SUBCELLULAR LOCATION</scope>
</reference>
<reference key="7">
    <citation type="journal article" date="1993" name="Infect. Immun.">
        <title>Heterogeneity of the purified extracellular aspartyl proteinase from Candida albicans: characterization with monoclonal antibodies and N-terminal amino acid sequence analysis.</title>
        <authorList>
            <person name="Morrison C.J."/>
            <person name="Hurst S.F."/>
            <person name="Bragg S.L."/>
            <person name="Kuykendall R.J."/>
            <person name="Diaz H."/>
            <person name="Pohl J."/>
            <person name="Reiss E."/>
        </authorList>
    </citation>
    <scope>SUBCELLULAR LOCATION</scope>
</reference>
<reference key="8">
    <citation type="journal article" date="1993" name="Infect. Immun.">
        <title>The genes encoding the secreted aspartyl proteinases of Candida albicans constitute a family with at least three members.</title>
        <authorList>
            <person name="Magee B.B."/>
            <person name="Hube B."/>
            <person name="Wright R.J."/>
            <person name="Sullivan P.J."/>
            <person name="Magee P.T."/>
        </authorList>
    </citation>
    <scope>IDENTIFICATION</scope>
</reference>
<reference key="9">
    <citation type="journal article" date="1997" name="Microbiology">
        <title>Analysis of secreted aspartic proteinases from Candida albicans: purification and characterization of individual Sap1, Sap2 and Sap3 isoenzymes.</title>
        <authorList>
            <person name="Smolenski G."/>
            <person name="Sullivan P.A."/>
            <person name="Cutfield S.M."/>
            <person name="Cutfield J.F."/>
        </authorList>
    </citation>
    <scope>CATALYTIC ACTIVITY</scope>
    <scope>BIOPHYSICOCHEMICAL PROPERTIES</scope>
</reference>
<reference key="10">
    <citation type="journal article" date="1999" name="J. Infect. Dis.">
        <title>Evidence that members of the secretory aspartyl proteinase gene family, in particular SAP2, are virulence factors for Candida vaginitis.</title>
        <authorList>
            <person name="De Bernardis F."/>
            <person name="Arancia S."/>
            <person name="Morelli L."/>
            <person name="Hube B."/>
            <person name="Sanglard D."/>
            <person name="Schafer W."/>
            <person name="Cassone A."/>
        </authorList>
    </citation>
    <scope>SUBCELLULAR LOCATION</scope>
    <scope>CATALYTIC ACTIVITY</scope>
</reference>
<reference key="11">
    <citation type="journal article" date="2001" name="J. Med. Microbiol.">
        <title>Different isoforms of secreted aspartyl proteinases (Sap) are expressed by Candida albicans during oral and cutaneous candidosis in vivo.</title>
        <authorList>
            <person name="Schaller M."/>
            <person name="Januschke E."/>
            <person name="Schackert C."/>
            <person name="Woerle B."/>
            <person name="Korting H.C."/>
        </authorList>
    </citation>
    <scope>FUNCTION</scope>
</reference>
<reference key="12">
    <citation type="journal article" date="2002" name="J. Mol. Recognit.">
        <title>Analysis of the interaction between the aspartic peptidase inhibitor SQAPI and aspartic peptidases using surface plasmon resonance.</title>
        <authorList>
            <person name="Farley P.C."/>
            <person name="Christeller J.T."/>
            <person name="Sullivan M.E."/>
            <person name="Sullivan P.A."/>
            <person name="Laing W.A."/>
        </authorList>
    </citation>
    <scope>ACTIVITY REGULATION</scope>
</reference>
<reference key="13">
    <citation type="journal article" date="2003" name="Infect. Immun.">
        <title>The secreted aspartyl proteinases Sap1 and Sap2 cause tissue damage in an in vitro model of vaginal candidiasis based on reconstituted human vaginal epithelium.</title>
        <authorList>
            <person name="Schaller M."/>
            <person name="Bein M."/>
            <person name="Korting H.C."/>
            <person name="Baur S."/>
            <person name="Hamm G."/>
            <person name="Monod M."/>
            <person name="Beinhauer S."/>
            <person name="Hube B."/>
        </authorList>
    </citation>
    <scope>FUNCTION</scope>
</reference>
<reference key="14">
    <citation type="journal article" date="2005" name="Infect. Immun.">
        <title>Candida albicans-secreted aspartic proteinases modify the epithelial cytokine response in an in vitro model of vaginal candidiasis.</title>
        <authorList>
            <person name="Schaller M."/>
            <person name="Korting H.C."/>
            <person name="Borelli C."/>
            <person name="Hamm G."/>
            <person name="Hube B."/>
        </authorList>
    </citation>
    <scope>FUNCTION</scope>
</reference>
<reference key="15">
    <citation type="journal article" date="2005" name="J. Antimicrob. Chemother.">
        <title>Exposure of Candida albicans to antifungal agents affects expression of SAP2 and SAP9 secreted proteinase genes.</title>
        <authorList>
            <person name="Copping V.M.S."/>
            <person name="Barelle C.J."/>
            <person name="Hube B."/>
            <person name="Gow N.A.R."/>
            <person name="Brown A.J.P."/>
            <person name="Odds F.C."/>
        </authorList>
    </citation>
    <scope>FUNCTION</scope>
    <scope>INDUCTION</scope>
</reference>
<reference key="16">
    <citation type="journal article" date="2009" name="Mol. Immunol.">
        <title>The yeast Candida albicans evades human complement attack by secretion of aspartic proteases.</title>
        <authorList>
            <person name="Gropp K."/>
            <person name="Schild L."/>
            <person name="Schindler S."/>
            <person name="Hube B."/>
            <person name="Zipfel P.F."/>
            <person name="Skerka C."/>
        </authorList>
    </citation>
    <scope>FUNCTION</scope>
</reference>
<reference key="17">
    <citation type="journal article" date="2010" name="Infect. Immun.">
        <title>The inflammatory response induced by aspartic proteases of Candida albicans is independent of proteolytic activity.</title>
        <authorList>
            <person name="Pietrella D."/>
            <person name="Rachini A."/>
            <person name="Pandey N."/>
            <person name="Schild L."/>
            <person name="Netea M."/>
            <person name="Bistoni F."/>
            <person name="Hube B."/>
            <person name="Vecchiarelli A."/>
        </authorList>
    </citation>
    <scope>FUNCTION</scope>
</reference>
<reference key="18">
    <citation type="journal article" date="2011" name="J. Biochem.">
        <title>Comprehensive characterization of secreted aspartic proteases encoded by a virulence gene family in Candida albicans.</title>
        <authorList>
            <person name="Aoki W."/>
            <person name="Kitahara N."/>
            <person name="Miura N."/>
            <person name="Morisaka H."/>
            <person name="Yamamoto Y."/>
            <person name="Kuroda K."/>
            <person name="Ueda M."/>
        </authorList>
    </citation>
    <scope>CATALYTIC ACTIVITY</scope>
    <scope>BIOPHYSICOCHEMICAL PROPERTIES</scope>
</reference>
<reference key="19">
    <citation type="journal article" date="2012" name="Mycopathologia">
        <title>In vitro Candida albicans biofilm induced proteinase activity and SAP8 expression correlates with in vivo denture stomatitis severity.</title>
        <authorList>
            <person name="Ramage G."/>
            <person name="Coco B."/>
            <person name="Sherry L."/>
            <person name="Bagg J."/>
            <person name="Lappin D.F."/>
        </authorList>
    </citation>
    <scope>FUNCTION</scope>
    <scope>INDUCTION</scope>
</reference>
<reference key="20">
    <citation type="journal article" date="2012" name="Pol. J. Microbiol.">
        <title>In vitro study of secreted aspartyl proteinases Sap1 to Sap3 and Sap4 to Sap6 expression in Candida albicans pleomorphic forms.</title>
        <authorList>
            <person name="Staniszewska M."/>
            <person name="Bondaryk M."/>
            <person name="Siennicka K."/>
            <person name="Kurek A."/>
            <person name="Orlowski J."/>
            <person name="Schaller M."/>
            <person name="Kurzatkowski W."/>
        </authorList>
    </citation>
    <scope>INDUCTION</scope>
</reference>
<reference key="21">
    <citation type="journal article" date="2013" name="Peptides">
        <title>Secreted aspartic peptidases of Candida albicans liberate bactericidal hemocidins from human hemoglobin.</title>
        <authorList>
            <person name="Bochenska O."/>
            <person name="Rapala-Kozik M."/>
            <person name="Wolak N."/>
            <person name="Bras G."/>
            <person name="Kozik A."/>
            <person name="Dubin A."/>
            <person name="Aoki W."/>
            <person name="Ueda M."/>
            <person name="Mak P."/>
        </authorList>
    </citation>
    <scope>FUNCTION</scope>
</reference>
<reference key="22">
    <citation type="journal article" date="2016" name="Acta Biochim. Pol.">
        <title>The action of ten secreted aspartic proteases of pathogenic yeast Candida albicans on major human salivary antimicrobial peptide, histatin 5.</title>
        <authorList>
            <person name="Bochenska O."/>
            <person name="Rapala-Kozik M."/>
            <person name="Wolak N."/>
            <person name="Aoki W."/>
            <person name="Ueda M."/>
            <person name="Kozik A."/>
        </authorList>
    </citation>
    <scope>FUNCTION</scope>
    <scope>CATALYTIC ACTIVITY</scope>
    <scope>BIOPHYSICOCHEMICAL PROPERTIES</scope>
</reference>
<reference key="23">
    <citation type="journal article" date="2018" name="FEBS J.">
        <title>Engineering improved variants of the antifungal peptide histatin 5 with reduced susceptibility to Candida albicans secreted aspartic proteases and enhanced antimicrobial potency.</title>
        <authorList>
            <person name="Ikonomova S.P."/>
            <person name="Moghaddam-Taaheri P."/>
            <person name="Jabra-Rizk M.A."/>
            <person name="Wang Y."/>
            <person name="Karlsson A.J."/>
        </authorList>
    </citation>
    <scope>FUNCTION</scope>
    <scope>CATALYTIC ACTIVITY</scope>
</reference>
<reference key="24">
    <citation type="journal article" date="2020" name="Protein Sci.">
        <title>Effects of histatin 5 modifications on antifungal activity and kinetics of proteolysis.</title>
        <authorList>
            <person name="Ikonomova S.P."/>
            <person name="Moghaddam-Taaheri P."/>
            <person name="Wang Y."/>
            <person name="Doolin M.T."/>
            <person name="Stroka K.M."/>
            <person name="Hube B."/>
            <person name="Karlsson A.J."/>
        </authorList>
    </citation>
    <scope>FUNCTION</scope>
    <scope>CATALYTIC ACTIVITY</scope>
</reference>